<gene>
    <name evidence="1" type="primary">hisF</name>
    <name type="ordered locus">BCA_1465</name>
</gene>
<organism>
    <name type="scientific">Bacillus cereus (strain 03BB102)</name>
    <dbReference type="NCBI Taxonomy" id="572264"/>
    <lineage>
        <taxon>Bacteria</taxon>
        <taxon>Bacillati</taxon>
        <taxon>Bacillota</taxon>
        <taxon>Bacilli</taxon>
        <taxon>Bacillales</taxon>
        <taxon>Bacillaceae</taxon>
        <taxon>Bacillus</taxon>
        <taxon>Bacillus cereus group</taxon>
    </lineage>
</organism>
<comment type="function">
    <text evidence="1">IGPS catalyzes the conversion of PRFAR and glutamine to IGP, AICAR and glutamate. The HisF subunit catalyzes the cyclization activity that produces IGP and AICAR from PRFAR using the ammonia provided by the HisH subunit.</text>
</comment>
<comment type="catalytic activity">
    <reaction evidence="1">
        <text>5-[(5-phospho-1-deoxy-D-ribulos-1-ylimino)methylamino]-1-(5-phospho-beta-D-ribosyl)imidazole-4-carboxamide + L-glutamine = D-erythro-1-(imidazol-4-yl)glycerol 3-phosphate + 5-amino-1-(5-phospho-beta-D-ribosyl)imidazole-4-carboxamide + L-glutamate + H(+)</text>
        <dbReference type="Rhea" id="RHEA:24793"/>
        <dbReference type="ChEBI" id="CHEBI:15378"/>
        <dbReference type="ChEBI" id="CHEBI:29985"/>
        <dbReference type="ChEBI" id="CHEBI:58278"/>
        <dbReference type="ChEBI" id="CHEBI:58359"/>
        <dbReference type="ChEBI" id="CHEBI:58475"/>
        <dbReference type="ChEBI" id="CHEBI:58525"/>
        <dbReference type="EC" id="4.3.2.10"/>
    </reaction>
</comment>
<comment type="pathway">
    <text evidence="1">Amino-acid biosynthesis; L-histidine biosynthesis; L-histidine from 5-phospho-alpha-D-ribose 1-diphosphate: step 5/9.</text>
</comment>
<comment type="subunit">
    <text evidence="1">Heterodimer of HisH and HisF.</text>
</comment>
<comment type="subcellular location">
    <subcellularLocation>
        <location evidence="1">Cytoplasm</location>
    </subcellularLocation>
</comment>
<comment type="similarity">
    <text evidence="1">Belongs to the HisA/HisF family.</text>
</comment>
<sequence length="252" mass="27002">MLAKRIIPCLDVKEGRVVKGVNFIGLQDVGDPVEIAALYNDAGADEIVFLDITATHEGRKTIIDVVKKTASKVFIPLTVGGGISSVKDMYKLLRAGADKVSINSAAVRNPKLIEEGAQHFGSQCIVVAIDARKVAEGKWNVYVNGGRVDTGMDAIEWAKRVVMLGAGEILLTSMDADGTKNGYDLRLTEEISKSVSVPVIASGGCGHADHIIEVFQKTTVDAALAASIFHYGEATVQDVKRKLRNANVEVRL</sequence>
<feature type="chain" id="PRO_1000148903" description="Imidazole glycerol phosphate synthase subunit HisF">
    <location>
        <begin position="1"/>
        <end position="252"/>
    </location>
</feature>
<feature type="active site" evidence="1">
    <location>
        <position position="11"/>
    </location>
</feature>
<feature type="active site" evidence="1">
    <location>
        <position position="130"/>
    </location>
</feature>
<evidence type="ECO:0000255" key="1">
    <source>
        <dbReference type="HAMAP-Rule" id="MF_01013"/>
    </source>
</evidence>
<keyword id="KW-0028">Amino-acid biosynthesis</keyword>
<keyword id="KW-0963">Cytoplasm</keyword>
<keyword id="KW-0368">Histidine biosynthesis</keyword>
<keyword id="KW-0456">Lyase</keyword>
<accession>C1EMQ7</accession>
<name>HIS6_BACC3</name>
<proteinExistence type="inferred from homology"/>
<dbReference type="EC" id="4.3.2.10" evidence="1"/>
<dbReference type="EMBL" id="CP001407">
    <property type="protein sequence ID" value="ACO27986.1"/>
    <property type="molecule type" value="Genomic_DNA"/>
</dbReference>
<dbReference type="RefSeq" id="WP_000880095.1">
    <property type="nucleotide sequence ID" value="NZ_CP009318.1"/>
</dbReference>
<dbReference type="SMR" id="C1EMQ7"/>
<dbReference type="KEGG" id="bcx:BCA_1465"/>
<dbReference type="PATRIC" id="fig|572264.18.peg.1415"/>
<dbReference type="UniPathway" id="UPA00031">
    <property type="reaction ID" value="UER00010"/>
</dbReference>
<dbReference type="Proteomes" id="UP000002210">
    <property type="component" value="Chromosome"/>
</dbReference>
<dbReference type="GO" id="GO:0005737">
    <property type="term" value="C:cytoplasm"/>
    <property type="evidence" value="ECO:0007669"/>
    <property type="project" value="UniProtKB-SubCell"/>
</dbReference>
<dbReference type="GO" id="GO:0000107">
    <property type="term" value="F:imidazoleglycerol-phosphate synthase activity"/>
    <property type="evidence" value="ECO:0007669"/>
    <property type="project" value="UniProtKB-UniRule"/>
</dbReference>
<dbReference type="GO" id="GO:0016829">
    <property type="term" value="F:lyase activity"/>
    <property type="evidence" value="ECO:0007669"/>
    <property type="project" value="UniProtKB-KW"/>
</dbReference>
<dbReference type="GO" id="GO:0000105">
    <property type="term" value="P:L-histidine biosynthetic process"/>
    <property type="evidence" value="ECO:0007669"/>
    <property type="project" value="UniProtKB-UniRule"/>
</dbReference>
<dbReference type="CDD" id="cd04731">
    <property type="entry name" value="HisF"/>
    <property type="match status" value="1"/>
</dbReference>
<dbReference type="FunFam" id="3.20.20.70:FF:000006">
    <property type="entry name" value="Imidazole glycerol phosphate synthase subunit HisF"/>
    <property type="match status" value="1"/>
</dbReference>
<dbReference type="Gene3D" id="3.20.20.70">
    <property type="entry name" value="Aldolase class I"/>
    <property type="match status" value="1"/>
</dbReference>
<dbReference type="HAMAP" id="MF_01013">
    <property type="entry name" value="HisF"/>
    <property type="match status" value="1"/>
</dbReference>
<dbReference type="InterPro" id="IPR013785">
    <property type="entry name" value="Aldolase_TIM"/>
</dbReference>
<dbReference type="InterPro" id="IPR006062">
    <property type="entry name" value="His_biosynth"/>
</dbReference>
<dbReference type="InterPro" id="IPR004651">
    <property type="entry name" value="HisF"/>
</dbReference>
<dbReference type="InterPro" id="IPR050064">
    <property type="entry name" value="IGPS_HisA/HisF"/>
</dbReference>
<dbReference type="InterPro" id="IPR011060">
    <property type="entry name" value="RibuloseP-bd_barrel"/>
</dbReference>
<dbReference type="NCBIfam" id="TIGR00735">
    <property type="entry name" value="hisF"/>
    <property type="match status" value="1"/>
</dbReference>
<dbReference type="PANTHER" id="PTHR21235:SF2">
    <property type="entry name" value="IMIDAZOLE GLYCEROL PHOSPHATE SYNTHASE HISHF"/>
    <property type="match status" value="1"/>
</dbReference>
<dbReference type="PANTHER" id="PTHR21235">
    <property type="entry name" value="IMIDAZOLE GLYCEROL PHOSPHATE SYNTHASE SUBUNIT HISF/H IGP SYNTHASE SUBUNIT HISF/H"/>
    <property type="match status" value="1"/>
</dbReference>
<dbReference type="Pfam" id="PF00977">
    <property type="entry name" value="His_biosynth"/>
    <property type="match status" value="1"/>
</dbReference>
<dbReference type="SUPFAM" id="SSF51366">
    <property type="entry name" value="Ribulose-phoshate binding barrel"/>
    <property type="match status" value="1"/>
</dbReference>
<reference key="1">
    <citation type="submission" date="2009-02" db="EMBL/GenBank/DDBJ databases">
        <title>Genome sequence of Bacillus cereus 03BB102.</title>
        <authorList>
            <person name="Dodson R.J."/>
            <person name="Jackson P."/>
            <person name="Munk A.C."/>
            <person name="Brettin T."/>
            <person name="Bruce D."/>
            <person name="Detter C."/>
            <person name="Tapia R."/>
            <person name="Han C."/>
            <person name="Sutton G."/>
            <person name="Sims D."/>
        </authorList>
    </citation>
    <scope>NUCLEOTIDE SEQUENCE [LARGE SCALE GENOMIC DNA]</scope>
    <source>
        <strain>03BB102</strain>
    </source>
</reference>
<protein>
    <recommendedName>
        <fullName evidence="1">Imidazole glycerol phosphate synthase subunit HisF</fullName>
        <ecNumber evidence="1">4.3.2.10</ecNumber>
    </recommendedName>
    <alternativeName>
        <fullName evidence="1">IGP synthase cyclase subunit</fullName>
    </alternativeName>
    <alternativeName>
        <fullName evidence="1">IGP synthase subunit HisF</fullName>
    </alternativeName>
    <alternativeName>
        <fullName evidence="1">ImGP synthase subunit HisF</fullName>
        <shortName evidence="1">IGPS subunit HisF</shortName>
    </alternativeName>
</protein>